<sequence>MNWRSERIWVEFITGSRKISNFCWAFILFLGSSGFLLVGISSYLGKNFISLFPPQQILFFPQGLVMSFYGIAGLFISAYLWCAISWNVGSGYDRFDRKEGIVCIFRWGFPGKNRRIFFRYLIKDIQSIRIELKEGIYTRRVLYLEIRGQGAIPLTRTDENLTPREMEQKAAELAYFLRVPIEVF</sequence>
<proteinExistence type="inferred from homology"/>
<feature type="chain" id="PRO_0000217629" description="Photosystem I assembly protein Ycf4">
    <location>
        <begin position="1"/>
        <end position="184"/>
    </location>
</feature>
<feature type="transmembrane region" description="Helical" evidence="1">
    <location>
        <begin position="21"/>
        <end position="43"/>
    </location>
</feature>
<feature type="transmembrane region" description="Helical" evidence="1">
    <location>
        <begin position="63"/>
        <end position="85"/>
    </location>
</feature>
<comment type="function">
    <text evidence="1">Seems to be required for the assembly of the photosystem I complex.</text>
</comment>
<comment type="subcellular location">
    <subcellularLocation>
        <location evidence="1">Plastid</location>
        <location evidence="1">Chloroplast thylakoid membrane</location>
        <topology evidence="1">Multi-pass membrane protein</topology>
    </subcellularLocation>
</comment>
<comment type="similarity">
    <text evidence="1">Belongs to the Ycf4 family.</text>
</comment>
<accession>Q9M3L5</accession>
<reference key="1">
    <citation type="journal article" date="2001" name="Plant Mol. Biol.">
        <title>The plastid chromosome of spinach (Spinacia oleracea): complete nucleotide sequence and gene organization.</title>
        <authorList>
            <person name="Schmitz-Linneweber C."/>
            <person name="Maier R.M."/>
            <person name="Alcaraz J.-P."/>
            <person name="Cottet A."/>
            <person name="Herrmann R.G."/>
            <person name="Mache R."/>
        </authorList>
    </citation>
    <scope>NUCLEOTIDE SEQUENCE [LARGE SCALE GENOMIC DNA]</scope>
    <source>
        <strain>cv. Geant d'hiver</strain>
        <strain>cv. Monatol</strain>
    </source>
</reference>
<evidence type="ECO:0000255" key="1">
    <source>
        <dbReference type="HAMAP-Rule" id="MF_00437"/>
    </source>
</evidence>
<organism>
    <name type="scientific">Spinacia oleracea</name>
    <name type="common">Spinach</name>
    <dbReference type="NCBI Taxonomy" id="3562"/>
    <lineage>
        <taxon>Eukaryota</taxon>
        <taxon>Viridiplantae</taxon>
        <taxon>Streptophyta</taxon>
        <taxon>Embryophyta</taxon>
        <taxon>Tracheophyta</taxon>
        <taxon>Spermatophyta</taxon>
        <taxon>Magnoliopsida</taxon>
        <taxon>eudicotyledons</taxon>
        <taxon>Gunneridae</taxon>
        <taxon>Pentapetalae</taxon>
        <taxon>Caryophyllales</taxon>
        <taxon>Chenopodiaceae</taxon>
        <taxon>Chenopodioideae</taxon>
        <taxon>Anserineae</taxon>
        <taxon>Spinacia</taxon>
    </lineage>
</organism>
<keyword id="KW-0150">Chloroplast</keyword>
<keyword id="KW-0472">Membrane</keyword>
<keyword id="KW-0602">Photosynthesis</keyword>
<keyword id="KW-0934">Plastid</keyword>
<keyword id="KW-1185">Reference proteome</keyword>
<keyword id="KW-0793">Thylakoid</keyword>
<keyword id="KW-0812">Transmembrane</keyword>
<keyword id="KW-1133">Transmembrane helix</keyword>
<gene>
    <name evidence="1" type="primary">ycf4</name>
</gene>
<geneLocation type="chloroplast"/>
<protein>
    <recommendedName>
        <fullName evidence="1">Photosystem I assembly protein Ycf4</fullName>
    </recommendedName>
</protein>
<name>YCF4_SPIOL</name>
<dbReference type="EMBL" id="AJ400848">
    <property type="protein sequence ID" value="CAB88740.1"/>
    <property type="molecule type" value="Genomic_DNA"/>
</dbReference>
<dbReference type="RefSeq" id="NP_054947.1">
    <property type="nucleotide sequence ID" value="NC_002202.1"/>
</dbReference>
<dbReference type="SMR" id="Q9M3L5"/>
<dbReference type="FunCoup" id="Q9M3L5">
    <property type="interactions" value="76"/>
</dbReference>
<dbReference type="STRING" id="3562.Q9M3L5"/>
<dbReference type="GeneID" id="2715691"/>
<dbReference type="KEGG" id="soe:2715691"/>
<dbReference type="InParanoid" id="Q9M3L5"/>
<dbReference type="OrthoDB" id="1927442at2759"/>
<dbReference type="Proteomes" id="UP001155700">
    <property type="component" value="Chloroplast Pltd"/>
</dbReference>
<dbReference type="GO" id="GO:0009535">
    <property type="term" value="C:chloroplast thylakoid membrane"/>
    <property type="evidence" value="ECO:0007669"/>
    <property type="project" value="UniProtKB-SubCell"/>
</dbReference>
<dbReference type="GO" id="GO:0009522">
    <property type="term" value="C:photosystem I"/>
    <property type="evidence" value="ECO:0007669"/>
    <property type="project" value="InterPro"/>
</dbReference>
<dbReference type="GO" id="GO:0015979">
    <property type="term" value="P:photosynthesis"/>
    <property type="evidence" value="ECO:0007669"/>
    <property type="project" value="UniProtKB-UniRule"/>
</dbReference>
<dbReference type="HAMAP" id="MF_00437">
    <property type="entry name" value="Ycf4"/>
    <property type="match status" value="1"/>
</dbReference>
<dbReference type="InterPro" id="IPR003359">
    <property type="entry name" value="PSI_Ycf4_assembly"/>
</dbReference>
<dbReference type="PANTHER" id="PTHR33288">
    <property type="match status" value="1"/>
</dbReference>
<dbReference type="PANTHER" id="PTHR33288:SF4">
    <property type="entry name" value="PHOTOSYSTEM I ASSEMBLY PROTEIN YCF4"/>
    <property type="match status" value="1"/>
</dbReference>
<dbReference type="Pfam" id="PF02392">
    <property type="entry name" value="Ycf4"/>
    <property type="match status" value="1"/>
</dbReference>